<protein>
    <recommendedName>
        <fullName evidence="1">K(+)/H(+) antiporter NhaP2</fullName>
    </recommendedName>
    <alternativeName>
        <fullName evidence="1">Potassium/proton antiporter NhaP2</fullName>
    </alternativeName>
</protein>
<proteinExistence type="inferred from homology"/>
<organism>
    <name type="scientific">Shigella boydii serotype 4 (strain Sb227)</name>
    <dbReference type="NCBI Taxonomy" id="300268"/>
    <lineage>
        <taxon>Bacteria</taxon>
        <taxon>Pseudomonadati</taxon>
        <taxon>Pseudomonadota</taxon>
        <taxon>Gammaproteobacteria</taxon>
        <taxon>Enterobacterales</taxon>
        <taxon>Enterobacteriaceae</taxon>
        <taxon>Shigella</taxon>
    </lineage>
</organism>
<name>NHAP2_SHIBS</name>
<comment type="function">
    <text evidence="1">K(+)/H(+) antiporter that extrudes potassium in exchange for external protons and maintains the internal concentration of potassium under toxic levels.</text>
</comment>
<comment type="catalytic activity">
    <reaction evidence="1">
        <text>K(+)(in) + H(+)(out) = K(+)(out) + H(+)(in)</text>
        <dbReference type="Rhea" id="RHEA:29467"/>
        <dbReference type="ChEBI" id="CHEBI:15378"/>
        <dbReference type="ChEBI" id="CHEBI:29103"/>
    </reaction>
    <physiologicalReaction direction="left-to-right" evidence="1">
        <dbReference type="Rhea" id="RHEA:29468"/>
    </physiologicalReaction>
</comment>
<comment type="subcellular location">
    <subcellularLocation>
        <location evidence="1">Cell inner membrane</location>
        <topology evidence="1">Multi-pass membrane protein</topology>
    </subcellularLocation>
</comment>
<comment type="similarity">
    <text evidence="1">Belongs to the monovalent cation:proton antiporter 1 (CPA1) transporter (TC 2.A.36) family. NhaP2 subfamily.</text>
</comment>
<comment type="sequence caution" evidence="2">
    <conflict type="erroneous initiation">
        <sequence resource="EMBL-CDS" id="ABB66477"/>
    </conflict>
</comment>
<evidence type="ECO:0000255" key="1">
    <source>
        <dbReference type="HAMAP-Rule" id="MF_01075"/>
    </source>
</evidence>
<evidence type="ECO:0000305" key="2"/>
<dbReference type="EMBL" id="CP000036">
    <property type="protein sequence ID" value="ABB66477.1"/>
    <property type="status" value="ALT_INIT"/>
    <property type="molecule type" value="Genomic_DNA"/>
</dbReference>
<dbReference type="RefSeq" id="WP_000340198.1">
    <property type="nucleotide sequence ID" value="NC_007613.1"/>
</dbReference>
<dbReference type="SMR" id="Q31ZN1"/>
<dbReference type="KEGG" id="sbo:SBO_1881"/>
<dbReference type="HOGENOM" id="CLU_005912_9_2_6"/>
<dbReference type="Proteomes" id="UP000007067">
    <property type="component" value="Chromosome"/>
</dbReference>
<dbReference type="GO" id="GO:0005886">
    <property type="term" value="C:plasma membrane"/>
    <property type="evidence" value="ECO:0007669"/>
    <property type="project" value="UniProtKB-SubCell"/>
</dbReference>
<dbReference type="GO" id="GO:0050660">
    <property type="term" value="F:flavin adenine dinucleotide binding"/>
    <property type="evidence" value="ECO:0007669"/>
    <property type="project" value="InterPro"/>
</dbReference>
<dbReference type="GO" id="GO:0015386">
    <property type="term" value="F:potassium:proton antiporter activity"/>
    <property type="evidence" value="ECO:0007669"/>
    <property type="project" value="UniProtKB-UniRule"/>
</dbReference>
<dbReference type="GO" id="GO:0006884">
    <property type="term" value="P:cell volume homeostasis"/>
    <property type="evidence" value="ECO:0007669"/>
    <property type="project" value="InterPro"/>
</dbReference>
<dbReference type="FunFam" id="1.20.1530.20:FF:000002">
    <property type="entry name" value="K(+)/H(+) antiporter NhaP2"/>
    <property type="match status" value="1"/>
</dbReference>
<dbReference type="FunFam" id="3.30.465.10:FF:000009">
    <property type="entry name" value="K(+)/H(+) antiporter NhaP2"/>
    <property type="match status" value="1"/>
</dbReference>
<dbReference type="FunFam" id="3.30.70.1450:FF:000007">
    <property type="entry name" value="K(+)/H(+) antiporter NhaP2"/>
    <property type="match status" value="1"/>
</dbReference>
<dbReference type="Gene3D" id="1.20.1530.20">
    <property type="match status" value="1"/>
</dbReference>
<dbReference type="Gene3D" id="3.30.465.10">
    <property type="match status" value="1"/>
</dbReference>
<dbReference type="Gene3D" id="3.30.70.1450">
    <property type="entry name" value="Regulator of K+ conductance, C-terminal domain"/>
    <property type="match status" value="1"/>
</dbReference>
<dbReference type="HAMAP" id="MF_01075">
    <property type="entry name" value="NhaP2"/>
    <property type="match status" value="1"/>
</dbReference>
<dbReference type="InterPro" id="IPR006153">
    <property type="entry name" value="Cation/H_exchanger_TM"/>
</dbReference>
<dbReference type="InterPro" id="IPR036318">
    <property type="entry name" value="FAD-bd_PCMH-like_sf"/>
</dbReference>
<dbReference type="InterPro" id="IPR016169">
    <property type="entry name" value="FAD-bd_PCMH_sub2"/>
</dbReference>
<dbReference type="InterPro" id="IPR038770">
    <property type="entry name" value="Na+/solute_symporter_sf"/>
</dbReference>
<dbReference type="InterPro" id="IPR023729">
    <property type="entry name" value="NhaP2"/>
</dbReference>
<dbReference type="InterPro" id="IPR006037">
    <property type="entry name" value="RCK_C"/>
</dbReference>
<dbReference type="InterPro" id="IPR036721">
    <property type="entry name" value="RCK_C_sf"/>
</dbReference>
<dbReference type="InterPro" id="IPR005170">
    <property type="entry name" value="Transptr-assoc_dom"/>
</dbReference>
<dbReference type="NCBIfam" id="NF003714">
    <property type="entry name" value="PRK05326.1-1"/>
    <property type="match status" value="1"/>
</dbReference>
<dbReference type="NCBIfam" id="NF003715">
    <property type="entry name" value="PRK05326.1-2"/>
    <property type="match status" value="1"/>
</dbReference>
<dbReference type="NCBIfam" id="NF003716">
    <property type="entry name" value="PRK05326.1-3"/>
    <property type="match status" value="1"/>
</dbReference>
<dbReference type="PANTHER" id="PTHR32507:SF7">
    <property type="entry name" value="K(+)_H(+) ANTIPORTER NHAP2"/>
    <property type="match status" value="1"/>
</dbReference>
<dbReference type="PANTHER" id="PTHR32507">
    <property type="entry name" value="NA(+)/H(+) ANTIPORTER 1"/>
    <property type="match status" value="1"/>
</dbReference>
<dbReference type="Pfam" id="PF03471">
    <property type="entry name" value="CorC_HlyC"/>
    <property type="match status" value="1"/>
</dbReference>
<dbReference type="Pfam" id="PF00999">
    <property type="entry name" value="Na_H_Exchanger"/>
    <property type="match status" value="1"/>
</dbReference>
<dbReference type="Pfam" id="PF02080">
    <property type="entry name" value="TrkA_C"/>
    <property type="match status" value="1"/>
</dbReference>
<dbReference type="SMART" id="SM01091">
    <property type="entry name" value="CorC_HlyC"/>
    <property type="match status" value="1"/>
</dbReference>
<dbReference type="SUPFAM" id="SSF56176">
    <property type="entry name" value="FAD-binding/transporter-associated domain-like"/>
    <property type="match status" value="1"/>
</dbReference>
<dbReference type="SUPFAM" id="SSF116726">
    <property type="entry name" value="TrkA C-terminal domain-like"/>
    <property type="match status" value="1"/>
</dbReference>
<dbReference type="PROSITE" id="PS51202">
    <property type="entry name" value="RCK_C"/>
    <property type="match status" value="1"/>
</dbReference>
<accession>Q31ZN1</accession>
<feature type="chain" id="PRO_0000278151" description="K(+)/H(+) antiporter NhaP2">
    <location>
        <begin position="1"/>
        <end position="578"/>
    </location>
</feature>
<feature type="transmembrane region" description="Helical" evidence="1">
    <location>
        <begin position="6"/>
        <end position="26"/>
    </location>
</feature>
<feature type="transmembrane region" description="Helical" evidence="1">
    <location>
        <begin position="30"/>
        <end position="50"/>
    </location>
</feature>
<feature type="transmembrane region" description="Helical" evidence="1">
    <location>
        <begin position="58"/>
        <end position="78"/>
    </location>
</feature>
<feature type="transmembrane region" description="Helical" evidence="1">
    <location>
        <begin position="87"/>
        <end position="107"/>
    </location>
</feature>
<feature type="transmembrane region" description="Helical" evidence="1">
    <location>
        <begin position="109"/>
        <end position="129"/>
    </location>
</feature>
<feature type="transmembrane region" description="Helical" evidence="1">
    <location>
        <begin position="156"/>
        <end position="176"/>
    </location>
</feature>
<feature type="transmembrane region" description="Helical" evidence="1">
    <location>
        <begin position="185"/>
        <end position="205"/>
    </location>
</feature>
<feature type="transmembrane region" description="Helical" evidence="1">
    <location>
        <begin position="216"/>
        <end position="236"/>
    </location>
</feature>
<feature type="transmembrane region" description="Helical" evidence="1">
    <location>
        <begin position="237"/>
        <end position="257"/>
    </location>
</feature>
<feature type="transmembrane region" description="Helical" evidence="1">
    <location>
        <begin position="270"/>
        <end position="290"/>
    </location>
</feature>
<feature type="transmembrane region" description="Helical" evidence="1">
    <location>
        <begin position="293"/>
        <end position="313"/>
    </location>
</feature>
<feature type="transmembrane region" description="Helical" evidence="1">
    <location>
        <begin position="334"/>
        <end position="354"/>
    </location>
</feature>
<feature type="transmembrane region" description="Helical" evidence="1">
    <location>
        <begin position="363"/>
        <end position="383"/>
    </location>
</feature>
<feature type="domain" description="RCK C-terminal" evidence="1">
    <location>
        <begin position="403"/>
        <end position="485"/>
    </location>
</feature>
<gene>
    <name evidence="1" type="primary">nhaP2</name>
    <name type="synonym">cvrA</name>
    <name type="ordered locus">SBO_1881</name>
</gene>
<reference key="1">
    <citation type="journal article" date="2005" name="Nucleic Acids Res.">
        <title>Genome dynamics and diversity of Shigella species, the etiologic agents of bacillary dysentery.</title>
        <authorList>
            <person name="Yang F."/>
            <person name="Yang J."/>
            <person name="Zhang X."/>
            <person name="Chen L."/>
            <person name="Jiang Y."/>
            <person name="Yan Y."/>
            <person name="Tang X."/>
            <person name="Wang J."/>
            <person name="Xiong Z."/>
            <person name="Dong J."/>
            <person name="Xue Y."/>
            <person name="Zhu Y."/>
            <person name="Xu X."/>
            <person name="Sun L."/>
            <person name="Chen S."/>
            <person name="Nie H."/>
            <person name="Peng J."/>
            <person name="Xu J."/>
            <person name="Wang Y."/>
            <person name="Yuan Z."/>
            <person name="Wen Y."/>
            <person name="Yao Z."/>
            <person name="Shen Y."/>
            <person name="Qiang B."/>
            <person name="Hou Y."/>
            <person name="Yu J."/>
            <person name="Jin Q."/>
        </authorList>
    </citation>
    <scope>NUCLEOTIDE SEQUENCE [LARGE SCALE GENOMIC DNA]</scope>
    <source>
        <strain>Sb227</strain>
    </source>
</reference>
<sequence length="578" mass="62265">MDATTIISLFILGSILVTSSILLSSFSSRLGIPILVIFLAIGMLAGVDGVGGIPFDNYPFAYMVSNLALAIILLDGGMRTQASSFRVALGPALSLATLGVLITSGLTGMMAAWLFNLDLIEGLLIGAIVGSTDAAAVFSLLGGKGLNERVGSTLEIESGSNDPMAVFLTITLIAMIQQHESSVSWMFIVDILQQFGLGIVIGLGGGYLLLQMINRIALPAGLYPLLALSGGILIFSLTTALEGSGILAVYLCGFLLGNRPIRNRYGILQNFDGLAWLAQIAMFLVLGLLVNPSDLLPIAIPALILSAWMIFFARPLSVFAGLLPFRGFNLRERVFISWVGLRGAVPIILAVFPMMAGLENARLFFNVAFFVVLVSLLLQGTSLSWAAKKAKVVVPPVGRPVSRVGLDIHPENPWEQFVYQLSADKWCVGAALRDLHMPKETRIAALFRDNQLLHPTGSTRLREGDVLCVIGRERDLPALGKLFSQSPPVALDQRFFGDFILEASAKYADVALIYGLEDGREYRDKQQTLGEIVQQLLGTAPVVGDQVEFAGMIWTVAEKEDNEVLKIGVRVAEEEAES</sequence>
<keyword id="KW-0050">Antiport</keyword>
<keyword id="KW-0997">Cell inner membrane</keyword>
<keyword id="KW-1003">Cell membrane</keyword>
<keyword id="KW-0406">Ion transport</keyword>
<keyword id="KW-0472">Membrane</keyword>
<keyword id="KW-0630">Potassium</keyword>
<keyword id="KW-0633">Potassium transport</keyword>
<keyword id="KW-0812">Transmembrane</keyword>
<keyword id="KW-1133">Transmembrane helix</keyword>
<keyword id="KW-0813">Transport</keyword>